<proteinExistence type="evidence at transcript level"/>
<gene>
    <name type="primary">MOSPD1</name>
</gene>
<name>MSPD1_BOVIN</name>
<organism>
    <name type="scientific">Bos taurus</name>
    <name type="common">Bovine</name>
    <dbReference type="NCBI Taxonomy" id="9913"/>
    <lineage>
        <taxon>Eukaryota</taxon>
        <taxon>Metazoa</taxon>
        <taxon>Chordata</taxon>
        <taxon>Craniata</taxon>
        <taxon>Vertebrata</taxon>
        <taxon>Euteleostomi</taxon>
        <taxon>Mammalia</taxon>
        <taxon>Eutheria</taxon>
        <taxon>Laurasiatheria</taxon>
        <taxon>Artiodactyla</taxon>
        <taxon>Ruminantia</taxon>
        <taxon>Pecora</taxon>
        <taxon>Bovidae</taxon>
        <taxon>Bovinae</taxon>
        <taxon>Bos</taxon>
    </lineage>
</organism>
<feature type="chain" id="PRO_0000248063" description="Motile sperm domain-containing protein 1">
    <location>
        <begin position="1"/>
        <end position="213"/>
    </location>
</feature>
<feature type="transmembrane region" description="Helical" evidence="2">
    <location>
        <begin position="159"/>
        <end position="179"/>
    </location>
</feature>
<feature type="transmembrane region" description="Helical" evidence="2">
    <location>
        <begin position="191"/>
        <end position="211"/>
    </location>
</feature>
<feature type="domain" description="MSP" evidence="3">
    <location>
        <begin position="16"/>
        <end position="143"/>
    </location>
</feature>
<feature type="short sequence motif" description="Nuclear export signal" evidence="1">
    <location>
        <begin position="205"/>
        <end position="208"/>
    </location>
</feature>
<protein>
    <recommendedName>
        <fullName>Motile sperm domain-containing protein 1</fullName>
    </recommendedName>
</protein>
<reference key="1">
    <citation type="submission" date="2005-12" db="EMBL/GenBank/DDBJ databases">
        <authorList>
            <consortium name="NIH - Mammalian Gene Collection (MGC) project"/>
        </authorList>
    </citation>
    <scope>NUCLEOTIDE SEQUENCE [LARGE SCALE MRNA]</scope>
    <source>
        <strain>Crossbred X Angus</strain>
        <tissue>Liver</tissue>
    </source>
</reference>
<keyword id="KW-0256">Endoplasmic reticulum</keyword>
<keyword id="KW-0333">Golgi apparatus</keyword>
<keyword id="KW-0472">Membrane</keyword>
<keyword id="KW-1185">Reference proteome</keyword>
<keyword id="KW-0812">Transmembrane</keyword>
<keyword id="KW-1133">Transmembrane helix</keyword>
<evidence type="ECO:0000250" key="1">
    <source>
        <dbReference type="UniProtKB" id="Q8VEL0"/>
    </source>
</evidence>
<evidence type="ECO:0000255" key="2"/>
<evidence type="ECO:0000255" key="3">
    <source>
        <dbReference type="PROSITE-ProRule" id="PRU00132"/>
    </source>
</evidence>
<accession>Q2T9W7</accession>
<dbReference type="EMBL" id="BC111231">
    <property type="protein sequence ID" value="AAI11232.1"/>
    <property type="molecule type" value="mRNA"/>
</dbReference>
<dbReference type="RefSeq" id="NP_001033226.1">
    <property type="nucleotide sequence ID" value="NM_001038137.1"/>
</dbReference>
<dbReference type="SMR" id="Q2T9W7"/>
<dbReference type="FunCoup" id="Q2T9W7">
    <property type="interactions" value="598"/>
</dbReference>
<dbReference type="STRING" id="9913.ENSBTAP00000067946"/>
<dbReference type="PaxDb" id="9913-ENSBTAP00000018489"/>
<dbReference type="Ensembl" id="ENSBTAT00000018489.4">
    <property type="protein sequence ID" value="ENSBTAP00000018489.3"/>
    <property type="gene ID" value="ENSBTAG00000013922.6"/>
</dbReference>
<dbReference type="GeneID" id="523578"/>
<dbReference type="KEGG" id="bta:523578"/>
<dbReference type="CTD" id="56180"/>
<dbReference type="VEuPathDB" id="HostDB:ENSBTAG00000013922"/>
<dbReference type="VGNC" id="VGNC:31564">
    <property type="gene designation" value="MOSPD1"/>
</dbReference>
<dbReference type="eggNOG" id="KOG0439">
    <property type="taxonomic scope" value="Eukaryota"/>
</dbReference>
<dbReference type="GeneTree" id="ENSGT00940000155266"/>
<dbReference type="HOGENOM" id="CLU_088040_0_0_1"/>
<dbReference type="InParanoid" id="Q2T9W7"/>
<dbReference type="OMA" id="VYNPYEF"/>
<dbReference type="OrthoDB" id="10022288at2759"/>
<dbReference type="TreeFam" id="TF319778"/>
<dbReference type="Proteomes" id="UP000009136">
    <property type="component" value="Chromosome X"/>
</dbReference>
<dbReference type="Bgee" id="ENSBTAG00000013922">
    <property type="expression patterns" value="Expressed in oocyte and 105 other cell types or tissues"/>
</dbReference>
<dbReference type="GO" id="GO:0005737">
    <property type="term" value="C:cytoplasm"/>
    <property type="evidence" value="ECO:0000318"/>
    <property type="project" value="GO_Central"/>
</dbReference>
<dbReference type="GO" id="GO:0005789">
    <property type="term" value="C:endoplasmic reticulum membrane"/>
    <property type="evidence" value="ECO:0007669"/>
    <property type="project" value="UniProtKB-SubCell"/>
</dbReference>
<dbReference type="GO" id="GO:0000139">
    <property type="term" value="C:Golgi membrane"/>
    <property type="evidence" value="ECO:0007669"/>
    <property type="project" value="UniProtKB-SubCell"/>
</dbReference>
<dbReference type="GO" id="GO:0005634">
    <property type="term" value="C:nucleus"/>
    <property type="evidence" value="ECO:0007669"/>
    <property type="project" value="Ensembl"/>
</dbReference>
<dbReference type="GO" id="GO:0048471">
    <property type="term" value="C:perinuclear region of cytoplasm"/>
    <property type="evidence" value="ECO:0007669"/>
    <property type="project" value="Ensembl"/>
</dbReference>
<dbReference type="GO" id="GO:0000122">
    <property type="term" value="P:negative regulation of transcription by RNA polymerase II"/>
    <property type="evidence" value="ECO:0007669"/>
    <property type="project" value="Ensembl"/>
</dbReference>
<dbReference type="GO" id="GO:0045944">
    <property type="term" value="P:positive regulation of transcription by RNA polymerase II"/>
    <property type="evidence" value="ECO:0007669"/>
    <property type="project" value="Ensembl"/>
</dbReference>
<dbReference type="FunFam" id="2.60.40.10:FF:000431">
    <property type="entry name" value="motile sperm domain-containing protein 1"/>
    <property type="match status" value="1"/>
</dbReference>
<dbReference type="Gene3D" id="2.60.40.10">
    <property type="entry name" value="Immunoglobulins"/>
    <property type="match status" value="1"/>
</dbReference>
<dbReference type="InterPro" id="IPR013783">
    <property type="entry name" value="Ig-like_fold"/>
</dbReference>
<dbReference type="InterPro" id="IPR039283">
    <property type="entry name" value="MOSPD1/3"/>
</dbReference>
<dbReference type="InterPro" id="IPR000535">
    <property type="entry name" value="MSP_dom"/>
</dbReference>
<dbReference type="InterPro" id="IPR008962">
    <property type="entry name" value="PapD-like_sf"/>
</dbReference>
<dbReference type="PANTHER" id="PTHR34441">
    <property type="entry name" value="MOTILE SPERM DOMAIN-CONTAINING PROTEIN 1"/>
    <property type="match status" value="1"/>
</dbReference>
<dbReference type="PANTHER" id="PTHR34441:SF2">
    <property type="entry name" value="MOTILE SPERM DOMAIN-CONTAINING PROTEIN 1"/>
    <property type="match status" value="1"/>
</dbReference>
<dbReference type="Pfam" id="PF00635">
    <property type="entry name" value="Motile_Sperm"/>
    <property type="match status" value="1"/>
</dbReference>
<dbReference type="SUPFAM" id="SSF49354">
    <property type="entry name" value="PapD-like"/>
    <property type="match status" value="1"/>
</dbReference>
<dbReference type="PROSITE" id="PS50202">
    <property type="entry name" value="MSP"/>
    <property type="match status" value="1"/>
</dbReference>
<sequence>MHQQKRQPELVEGNLPVFVFPTELIFYADDQSTHKQVLTLYNPYEFALKFKVLCTTPNKYVVVDAAGAVKPQCCMDIVIRHRDVRSCHYGVIDKFRLQVSEQSQRKALGRKEVVATLLPSAKEQQKEEEEKRIKEHLTESLFFEQSFQPENRTVSSGPSLLTVFLAVVCITALMLPTLGDVESLVPLYLHLSVNQKLVAAYILGLITMAIFRT</sequence>
<comment type="function">
    <text evidence="1">Plays a role in differentiation and/or proliferation of mesenchymal stem cells. Proposed to be involved in epithelial-to-mesenchymal transition (EMT). However, another study suggests that it is not required for EMT or stem cell self-renewal and acts during later stages of differentiation.</text>
</comment>
<comment type="subcellular location">
    <subcellularLocation>
        <location evidence="1">Endoplasmic reticulum membrane</location>
        <topology evidence="2">Multi-pass membrane protein</topology>
    </subcellularLocation>
    <subcellularLocation>
        <location evidence="1">Golgi apparatus membrane</location>
        <topology evidence="2">Multi-pass membrane protein</topology>
    </subcellularLocation>
</comment>